<gene>
    <name evidence="1" type="primary">queC</name>
    <name type="ordered locus">Bphyt_0317</name>
</gene>
<sequence>MIRKDAKRSALVLFSGGQDSATCLAWALERYETVETLGFDYGQRHRVELECREGFRNAVARAFPAWAERLGDDHMIDLSVLGAISDTAMTREIEIEATANGLPNTFVPGRNLMFMTIAAAIAYRRGLQVLVGGMCETDFSGYPDCRDDTMKALQVALNLGMDTRVLLETPLMWLDKGDTWRLAHQLGGDELVELVRVETHTCYVGERAELHAWGFGCGECPACRLRKRGYEAYLSGEKVTEAPV</sequence>
<feature type="chain" id="PRO_1000186569" description="7-cyano-7-deazaguanine synthase">
    <location>
        <begin position="1"/>
        <end position="244"/>
    </location>
</feature>
<feature type="binding site" evidence="1">
    <location>
        <begin position="14"/>
        <end position="24"/>
    </location>
    <ligand>
        <name>ATP</name>
        <dbReference type="ChEBI" id="CHEBI:30616"/>
    </ligand>
</feature>
<feature type="binding site" evidence="1">
    <location>
        <position position="202"/>
    </location>
    <ligand>
        <name>Zn(2+)</name>
        <dbReference type="ChEBI" id="CHEBI:29105"/>
    </ligand>
</feature>
<feature type="binding site" evidence="1">
    <location>
        <position position="217"/>
    </location>
    <ligand>
        <name>Zn(2+)</name>
        <dbReference type="ChEBI" id="CHEBI:29105"/>
    </ligand>
</feature>
<feature type="binding site" evidence="1">
    <location>
        <position position="220"/>
    </location>
    <ligand>
        <name>Zn(2+)</name>
        <dbReference type="ChEBI" id="CHEBI:29105"/>
    </ligand>
</feature>
<feature type="binding site" evidence="1">
    <location>
        <position position="223"/>
    </location>
    <ligand>
        <name>Zn(2+)</name>
        <dbReference type="ChEBI" id="CHEBI:29105"/>
    </ligand>
</feature>
<keyword id="KW-0067">ATP-binding</keyword>
<keyword id="KW-0436">Ligase</keyword>
<keyword id="KW-0479">Metal-binding</keyword>
<keyword id="KW-0547">Nucleotide-binding</keyword>
<keyword id="KW-0671">Queuosine biosynthesis</keyword>
<keyword id="KW-0862">Zinc</keyword>
<organism>
    <name type="scientific">Paraburkholderia phytofirmans (strain DSM 17436 / LMG 22146 / PsJN)</name>
    <name type="common">Burkholderia phytofirmans</name>
    <dbReference type="NCBI Taxonomy" id="398527"/>
    <lineage>
        <taxon>Bacteria</taxon>
        <taxon>Pseudomonadati</taxon>
        <taxon>Pseudomonadota</taxon>
        <taxon>Betaproteobacteria</taxon>
        <taxon>Burkholderiales</taxon>
        <taxon>Burkholderiaceae</taxon>
        <taxon>Paraburkholderia</taxon>
    </lineage>
</organism>
<dbReference type="EC" id="6.3.4.20" evidence="1"/>
<dbReference type="EMBL" id="CP001052">
    <property type="protein sequence ID" value="ACD14742.1"/>
    <property type="molecule type" value="Genomic_DNA"/>
</dbReference>
<dbReference type="RefSeq" id="WP_012431387.1">
    <property type="nucleotide sequence ID" value="NC_010681.1"/>
</dbReference>
<dbReference type="SMR" id="B2T1L3"/>
<dbReference type="STRING" id="398527.Bphyt_0317"/>
<dbReference type="KEGG" id="bpy:Bphyt_0317"/>
<dbReference type="eggNOG" id="COG0603">
    <property type="taxonomic scope" value="Bacteria"/>
</dbReference>
<dbReference type="HOGENOM" id="CLU_081854_0_0_4"/>
<dbReference type="OrthoDB" id="9789567at2"/>
<dbReference type="UniPathway" id="UPA00391"/>
<dbReference type="Proteomes" id="UP000001739">
    <property type="component" value="Chromosome 1"/>
</dbReference>
<dbReference type="GO" id="GO:0005524">
    <property type="term" value="F:ATP binding"/>
    <property type="evidence" value="ECO:0007669"/>
    <property type="project" value="UniProtKB-UniRule"/>
</dbReference>
<dbReference type="GO" id="GO:0016879">
    <property type="term" value="F:ligase activity, forming carbon-nitrogen bonds"/>
    <property type="evidence" value="ECO:0007669"/>
    <property type="project" value="UniProtKB-UniRule"/>
</dbReference>
<dbReference type="GO" id="GO:0008270">
    <property type="term" value="F:zinc ion binding"/>
    <property type="evidence" value="ECO:0007669"/>
    <property type="project" value="UniProtKB-UniRule"/>
</dbReference>
<dbReference type="GO" id="GO:0008616">
    <property type="term" value="P:queuosine biosynthetic process"/>
    <property type="evidence" value="ECO:0007669"/>
    <property type="project" value="UniProtKB-UniRule"/>
</dbReference>
<dbReference type="CDD" id="cd01995">
    <property type="entry name" value="QueC-like"/>
    <property type="match status" value="1"/>
</dbReference>
<dbReference type="Gene3D" id="3.40.50.620">
    <property type="entry name" value="HUPs"/>
    <property type="match status" value="1"/>
</dbReference>
<dbReference type="HAMAP" id="MF_01633">
    <property type="entry name" value="QueC"/>
    <property type="match status" value="1"/>
</dbReference>
<dbReference type="InterPro" id="IPR018317">
    <property type="entry name" value="QueC"/>
</dbReference>
<dbReference type="InterPro" id="IPR014729">
    <property type="entry name" value="Rossmann-like_a/b/a_fold"/>
</dbReference>
<dbReference type="NCBIfam" id="TIGR00364">
    <property type="entry name" value="7-cyano-7-deazaguanine synthase QueC"/>
    <property type="match status" value="1"/>
</dbReference>
<dbReference type="PANTHER" id="PTHR42914">
    <property type="entry name" value="7-CYANO-7-DEAZAGUANINE SYNTHASE"/>
    <property type="match status" value="1"/>
</dbReference>
<dbReference type="PANTHER" id="PTHR42914:SF1">
    <property type="entry name" value="7-CYANO-7-DEAZAGUANINE SYNTHASE"/>
    <property type="match status" value="1"/>
</dbReference>
<dbReference type="Pfam" id="PF06508">
    <property type="entry name" value="QueC"/>
    <property type="match status" value="1"/>
</dbReference>
<dbReference type="PIRSF" id="PIRSF006293">
    <property type="entry name" value="ExsB"/>
    <property type="match status" value="1"/>
</dbReference>
<dbReference type="SUPFAM" id="SSF52402">
    <property type="entry name" value="Adenine nucleotide alpha hydrolases-like"/>
    <property type="match status" value="1"/>
</dbReference>
<name>QUEC_PARPJ</name>
<reference key="1">
    <citation type="journal article" date="2011" name="J. Bacteriol.">
        <title>Complete genome sequence of the plant growth-promoting endophyte Burkholderia phytofirmans strain PsJN.</title>
        <authorList>
            <person name="Weilharter A."/>
            <person name="Mitter B."/>
            <person name="Shin M.V."/>
            <person name="Chain P.S."/>
            <person name="Nowak J."/>
            <person name="Sessitsch A."/>
        </authorList>
    </citation>
    <scope>NUCLEOTIDE SEQUENCE [LARGE SCALE GENOMIC DNA]</scope>
    <source>
        <strain>DSM 17436 / LMG 22146 / PsJN</strain>
    </source>
</reference>
<evidence type="ECO:0000255" key="1">
    <source>
        <dbReference type="HAMAP-Rule" id="MF_01633"/>
    </source>
</evidence>
<comment type="function">
    <text evidence="1">Catalyzes the ATP-dependent conversion of 7-carboxy-7-deazaguanine (CDG) to 7-cyano-7-deazaguanine (preQ(0)).</text>
</comment>
<comment type="catalytic activity">
    <reaction evidence="1">
        <text>7-carboxy-7-deazaguanine + NH4(+) + ATP = 7-cyano-7-deazaguanine + ADP + phosphate + H2O + H(+)</text>
        <dbReference type="Rhea" id="RHEA:27982"/>
        <dbReference type="ChEBI" id="CHEBI:15377"/>
        <dbReference type="ChEBI" id="CHEBI:15378"/>
        <dbReference type="ChEBI" id="CHEBI:28938"/>
        <dbReference type="ChEBI" id="CHEBI:30616"/>
        <dbReference type="ChEBI" id="CHEBI:43474"/>
        <dbReference type="ChEBI" id="CHEBI:45075"/>
        <dbReference type="ChEBI" id="CHEBI:61036"/>
        <dbReference type="ChEBI" id="CHEBI:456216"/>
        <dbReference type="EC" id="6.3.4.20"/>
    </reaction>
</comment>
<comment type="cofactor">
    <cofactor evidence="1">
        <name>Zn(2+)</name>
        <dbReference type="ChEBI" id="CHEBI:29105"/>
    </cofactor>
    <text evidence="1">Binds 1 zinc ion per subunit.</text>
</comment>
<comment type="pathway">
    <text evidence="1">Purine metabolism; 7-cyano-7-deazaguanine biosynthesis.</text>
</comment>
<comment type="similarity">
    <text evidence="1">Belongs to the QueC family.</text>
</comment>
<protein>
    <recommendedName>
        <fullName evidence="1">7-cyano-7-deazaguanine synthase</fullName>
        <ecNumber evidence="1">6.3.4.20</ecNumber>
    </recommendedName>
    <alternativeName>
        <fullName evidence="1">7-cyano-7-carbaguanine synthase</fullName>
    </alternativeName>
    <alternativeName>
        <fullName evidence="1">PreQ(0) synthase</fullName>
    </alternativeName>
    <alternativeName>
        <fullName evidence="1">Queuosine biosynthesis protein QueC</fullName>
    </alternativeName>
</protein>
<proteinExistence type="inferred from homology"/>
<accession>B2T1L3</accession>